<reference key="1">
    <citation type="journal article" date="2003" name="Mol. Biol. Evol.">
        <title>The basic helix-loop-helix transcription factor family in plants: a genome-wide study of protein structure and functional diversity.</title>
        <authorList>
            <person name="Heim M.A."/>
            <person name="Jakoby M."/>
            <person name="Werber M."/>
            <person name="Martin C."/>
            <person name="Weisshaar B."/>
            <person name="Bailey P.C."/>
        </authorList>
    </citation>
    <scope>NUCLEOTIDE SEQUENCE [MRNA]</scope>
    <scope>INDUCTION BY UV LIGHT</scope>
    <scope>TISSUE SPECIFICITY</scope>
    <scope>GENE FAMILY</scope>
    <scope>NOMENCLATURE</scope>
    <source>
        <strain>cv. Columbia</strain>
    </source>
</reference>
<reference key="2">
    <citation type="journal article" date="1997" name="DNA Res.">
        <title>Structural analysis of Arabidopsis thaliana chromosome 5. II. Sequence features of the regions of 1,044,062 bp covered by thirteen physically assigned P1 clones.</title>
        <authorList>
            <person name="Kotani H."/>
            <person name="Nakamura Y."/>
            <person name="Sato S."/>
            <person name="Kaneko T."/>
            <person name="Asamizu E."/>
            <person name="Miyajima N."/>
            <person name="Tabata S."/>
        </authorList>
    </citation>
    <scope>NUCLEOTIDE SEQUENCE [LARGE SCALE GENOMIC DNA]</scope>
    <source>
        <strain>cv. Columbia</strain>
    </source>
</reference>
<reference key="3">
    <citation type="journal article" date="2017" name="Plant J.">
        <title>Araport11: a complete reannotation of the Arabidopsis thaliana reference genome.</title>
        <authorList>
            <person name="Cheng C.Y."/>
            <person name="Krishnakumar V."/>
            <person name="Chan A.P."/>
            <person name="Thibaud-Nissen F."/>
            <person name="Schobel S."/>
            <person name="Town C.D."/>
        </authorList>
    </citation>
    <scope>GENOME REANNOTATION</scope>
    <source>
        <strain>cv. Columbia</strain>
    </source>
</reference>
<reference key="4">
    <citation type="journal article" date="2000" name="Genetics">
        <title>GL3 encodes a bHLH protein that regulates trichome development in arabidopsis through interaction with GL1 and TTG1.</title>
        <authorList>
            <person name="Payne C.T."/>
            <person name="Zhang F."/>
            <person name="Lloyd A.M."/>
        </authorList>
    </citation>
    <scope>FUNCTION</scope>
    <scope>INTERACTION WITH MYB0 AND TTG1</scope>
    <scope>DISRUPTION PHENOTYPE</scope>
</reference>
<reference key="5">
    <citation type="journal article" date="2003" name="Development">
        <title>A network of redundant bHLH proteins functions in all TTG1-dependent pathways of Arabidopsis.</title>
        <authorList>
            <person name="Zhang F."/>
            <person name="Gonzalez A."/>
            <person name="Zhao M."/>
            <person name="Payne C.T."/>
            <person name="Lloyd A.M."/>
        </authorList>
    </citation>
    <scope>FUNCTION</scope>
    <scope>DEVELOPMENTAL STAGE</scope>
    <scope>INTERACTION WITH BHLH2</scope>
</reference>
<reference key="6">
    <citation type="journal article" date="2003" name="Development">
        <title>A contradictory GLABRA3 allele helps define gene interactions controlling trichome development in Arabidopsis.</title>
        <authorList>
            <person name="Esch J.J."/>
            <person name="Chen M."/>
            <person name="Sanders M."/>
            <person name="Hillestad M."/>
            <person name="Ndkium S."/>
            <person name="Idelkope B."/>
            <person name="Neizer J."/>
            <person name="Marks M.D."/>
        </authorList>
    </citation>
    <scope>FUNCTION</scope>
    <scope>SUBCELLULAR LOCATION</scope>
    <scope>INTERACTION WITH MYB0; TTG1 AND TRY</scope>
    <scope>MUTAGENESIS OF LEU-78</scope>
</reference>
<reference key="7">
    <citation type="journal article" date="2003" name="Development">
        <title>The bHLH genes GLABRA3 (GL3) and ENHANCER OF GLABRA3 (EGL3) specify epidermal cell fate in the Arabidopsis root.</title>
        <authorList>
            <person name="Bernhardt C."/>
            <person name="Lee M.M."/>
            <person name="Gonzalez A."/>
            <person name="Zhang F."/>
            <person name="Lloyd A.M."/>
            <person name="Schiefelbein J."/>
        </authorList>
    </citation>
    <scope>FUNCTION</scope>
    <scope>INTERACTION WITH CPC AND MYB66</scope>
    <scope>TISSUE SPECIFICITY</scope>
</reference>
<reference key="8">
    <citation type="journal article" date="2003" name="Plant Cell">
        <title>The Arabidopsis basic/helix-loop-helix transcription factor family.</title>
        <authorList>
            <person name="Toledo-Ortiz G."/>
            <person name="Huq E."/>
            <person name="Quail P.H."/>
        </authorList>
    </citation>
    <scope>GENE FAMILY</scope>
</reference>
<reference key="9">
    <citation type="journal article" date="2003" name="Plant Cell">
        <title>Update on the basic helix-loop-helix transcription factor gene family in Arabidopsis thaliana.</title>
        <authorList>
            <person name="Bailey P.C."/>
            <person name="Martin C."/>
            <person name="Toledo-Ortiz G."/>
            <person name="Quail P.H."/>
            <person name="Huq E."/>
            <person name="Heim M.A."/>
            <person name="Jakoby M."/>
            <person name="Werber M."/>
            <person name="Weisshaar B."/>
        </authorList>
    </citation>
    <scope>GENE FAMILY</scope>
    <scope>NOMENCLATURE</scope>
</reference>
<reference key="10">
    <citation type="journal article" date="2003" name="Plant Mol. Biol.">
        <title>Two basic-helix-loop-helix genes (MYC-146 and GL3) from Arabidopsis can activate anthocyanin biosynthesis in a white-flowered Matthiola incana mutant.</title>
        <authorList>
            <person name="Ramsay N.A."/>
            <person name="Walker A.R."/>
            <person name="Mooney M."/>
            <person name="Gray J.C."/>
        </authorList>
    </citation>
    <scope>FUNCTION</scope>
</reference>
<reference key="11">
    <citation type="journal article" date="2004" name="Plant J.">
        <title>Comprehensive identification of Arabidopsis thaliana MYB transcription factors interacting with R/B-like BHLH proteins.</title>
        <authorList>
            <person name="Zimmermann I.M."/>
            <person name="Heim M.A."/>
            <person name="Weisshaar B."/>
            <person name="Uhrig J.F."/>
        </authorList>
    </citation>
    <scope>FUNCTION</scope>
    <scope>INTERACTION WITH MYB75; MYB90 AND TT2</scope>
</reference>
<reference key="12">
    <citation type="journal article" date="2005" name="Development">
        <title>The bHLH genes GL3 and EGL3 participate in an intercellular regulatory circuit that controls cell patterning in the Arabidopsis root epidermis.</title>
        <authorList>
            <person name="Bernhardt C."/>
            <person name="Zhao M."/>
            <person name="Gonzalez A."/>
            <person name="Lloyd A."/>
            <person name="Schiefelbein J."/>
        </authorList>
    </citation>
    <scope>FUNCTION</scope>
    <scope>INDUCTION</scope>
    <scope>TISSUE SPECIFICITY</scope>
    <scope>SUBCELLULAR LOCATION</scope>
</reference>
<reference key="13">
    <citation type="journal article" date="2005" name="Development">
        <title>Functional diversification of MYB23 and GL1 genes in trichome morphogenesis and initiation.</title>
        <authorList>
            <person name="Kirik V."/>
            <person name="Lee M.M."/>
            <person name="Wester K."/>
            <person name="Herrmann U."/>
            <person name="Zheng Z."/>
            <person name="Oppenheimer D."/>
            <person name="Schiefelbein J."/>
            <person name="Hulskamp M."/>
        </authorList>
    </citation>
    <scope>INTERACTION WITH MYB23; TTG1 AND MYB0</scope>
</reference>
<reference key="14">
    <citation type="journal article" date="2007" name="Planta">
        <title>Nitrogen deficiency enhances expression of specific MYB and bHLH transcription factors and accumulation of end products in the flavonoid pathway.</title>
        <authorList>
            <person name="Lea U.S."/>
            <person name="Slimestad R."/>
            <person name="Smedvig P."/>
            <person name="Lillo C."/>
        </authorList>
    </citation>
    <scope>INDUCTION BY NITROGEN DEFICIENCY</scope>
</reference>
<reference key="15">
    <citation type="journal article" date="2014" name="J. Exp. Bot.">
        <title>MYB82 functions in regulation of trichome development in Arabidopsis.</title>
        <authorList>
            <person name="Liang G."/>
            <person name="He H."/>
            <person name="Li Y."/>
            <person name="Ai Q."/>
            <person name="Yu D."/>
        </authorList>
    </citation>
    <scope>INTERACTION WITH MYB82</scope>
    <source>
        <strain>cv. Columbia</strain>
    </source>
</reference>
<comment type="function">
    <text evidence="4 6 7 8 9 10 11">Transcription activator, when associated with MYB75/PAP1, MYB90/PAP2 or TT2. Involved in epidermal cell fate specification. Negatively regulates stomata formation, but, in association with TTG1 and MYB0/GL1, promotes trichome formation, branching and endoreplication. Also regulates trichome cell wall maturation. Together with MYB66/WER, promotes the formation of non-hair cells in root epidermis cells in the N position. Whereas together with CPC, promotes the formation of hair cells in root epidermis cells in the H position by inhibiting non-hair cell formation. Also seems to play a role in the activation of anthocyanin biosynthesis, probably together with MYB75/PAP1. Activates the transcription of GL2.</text>
</comment>
<comment type="subunit">
    <text evidence="1 4 6 8 9 10 12 14">Efficient DNA binding requires dimerization with another bHLH protein (By similarity). Homodimer and heterodimer with BHLH2. Interacts directly with TTG1 and MYB0/GL1 to form a complex. Its interaction with TRY prevents MYB0/GL1 binding. Interacts with MYB75/PAP1, MYB90/PAP2, TT2, CPC, MYB23 and MYB66/WER. Interacts with MYB82 (PubMed:24803498).</text>
</comment>
<comment type="interaction">
    <interactant intactId="EBI-533348">
        <id>Q9FN69</id>
    </interactant>
    <interactant intactId="EBI-1543742">
        <id>P27900</id>
        <label>GL1</label>
    </interactant>
    <organismsDiffer>false</organismsDiffer>
    <experiments>5</experiments>
</comment>
<comment type="interaction">
    <interactant intactId="EBI-533348">
        <id>Q9FN69</id>
    </interactant>
    <interactant intactId="EBI-1545177">
        <id>Q9FE25</id>
        <label>MYB75</label>
    </interactant>
    <organismsDiffer>false</organismsDiffer>
    <experiments>2</experiments>
</comment>
<comment type="interaction">
    <interactant intactId="EBI-533348">
        <id>Q9FN69</id>
    </interactant>
    <interactant intactId="EBI-1545203">
        <id>Q9ZTC3</id>
        <label>MYB90</label>
    </interactant>
    <organismsDiffer>false</organismsDiffer>
    <experiments>2</experiments>
</comment>
<comment type="interaction">
    <interactant intactId="EBI-533348">
        <id>Q9FN69</id>
    </interactant>
    <interactant intactId="EBI-541099">
        <id>Q9FNZ5</id>
        <label>NIMIN-1</label>
    </interactant>
    <organismsDiffer>false</organismsDiffer>
    <experiments>3</experiments>
</comment>
<comment type="interaction">
    <interactant intactId="EBI-533348">
        <id>Q9FN69</id>
    </interactant>
    <interactant intactId="EBI-1388539">
        <id>Q9LMA8</id>
        <label>TIFY10A</label>
    </interactant>
    <organismsDiffer>false</organismsDiffer>
    <experiments>3</experiments>
</comment>
<comment type="interaction">
    <interactant intactId="EBI-533348">
        <id>Q9FN69</id>
    </interactant>
    <interactant intactId="EBI-395803">
        <id>Q9XGN1</id>
        <label>TTG1</label>
    </interactant>
    <organismsDiffer>false</organismsDiffer>
    <experiments>3</experiments>
</comment>
<comment type="interaction">
    <interactant intactId="EBI-533348">
        <id>Q9FN69</id>
    </interactant>
    <interactant intactId="EBI-533373">
        <id>Q9SEI0</id>
        <label>WER</label>
    </interactant>
    <organismsDiffer>false</organismsDiffer>
    <experiments>3</experiments>
</comment>
<comment type="subcellular location">
    <subcellularLocation>
        <location evidence="2 8 11">Nucleus</location>
    </subcellularLocation>
    <text>Moves from developing hair cells (trichoblasts) to developing non-hair cells (atrichoblasts). Also detected in trichome nucleus.</text>
</comment>
<comment type="tissue specificity">
    <text evidence="5 9 11">Mostly expressed in roots and flowers. Also present in stems and leaves, and, to a lower extent, in hypocotyls. Expressed in epidermal root hair cells (trichoblasts) and moves to root hairless cells (atrichoblasts) by a cell-to-cell movement through plasmodesmata (at protein level).</text>
</comment>
<comment type="developmental stage">
    <text evidence="6">Localized in trichome developing region of leaves, prior to trichome initiation. Levels increase in initiating and young trichome cells, but dropped in the pavement cells between trichomes. Disappears in mature trichomes.</text>
</comment>
<comment type="induction">
    <text evidence="5 11 13">By nitrogen deficiency and UV light. Negatively regulated by MYB66/WER, GL3 and BHLH2 in the developing non-hair cells, and positively regulated by CPC and TRY in the developing hair cells.</text>
</comment>
<comment type="disruption phenotype">
    <text evidence="4">Plants exhibit two-branched trichomes instead of three-branched trichomes.</text>
</comment>
<evidence type="ECO:0000250" key="1"/>
<evidence type="ECO:0000255" key="2">
    <source>
        <dbReference type="PROSITE-ProRule" id="PRU00981"/>
    </source>
</evidence>
<evidence type="ECO:0000256" key="3">
    <source>
        <dbReference type="SAM" id="MobiDB-lite"/>
    </source>
</evidence>
<evidence type="ECO:0000269" key="4">
    <source>
    </source>
</evidence>
<evidence type="ECO:0000269" key="5">
    <source>
    </source>
</evidence>
<evidence type="ECO:0000269" key="6">
    <source>
    </source>
</evidence>
<evidence type="ECO:0000269" key="7">
    <source>
    </source>
</evidence>
<evidence type="ECO:0000269" key="8">
    <source>
    </source>
</evidence>
<evidence type="ECO:0000269" key="9">
    <source>
    </source>
</evidence>
<evidence type="ECO:0000269" key="10">
    <source>
    </source>
</evidence>
<evidence type="ECO:0000269" key="11">
    <source>
    </source>
</evidence>
<evidence type="ECO:0000269" key="12">
    <source>
    </source>
</evidence>
<evidence type="ECO:0000269" key="13">
    <source>
    </source>
</evidence>
<evidence type="ECO:0000269" key="14">
    <source>
    </source>
</evidence>
<organism>
    <name type="scientific">Arabidopsis thaliana</name>
    <name type="common">Mouse-ear cress</name>
    <dbReference type="NCBI Taxonomy" id="3702"/>
    <lineage>
        <taxon>Eukaryota</taxon>
        <taxon>Viridiplantae</taxon>
        <taxon>Streptophyta</taxon>
        <taxon>Embryophyta</taxon>
        <taxon>Tracheophyta</taxon>
        <taxon>Spermatophyta</taxon>
        <taxon>Magnoliopsida</taxon>
        <taxon>eudicotyledons</taxon>
        <taxon>Gunneridae</taxon>
        <taxon>Pentapetalae</taxon>
        <taxon>rosids</taxon>
        <taxon>malvids</taxon>
        <taxon>Brassicales</taxon>
        <taxon>Brassicaceae</taxon>
        <taxon>Camelineae</taxon>
        <taxon>Arabidopsis</taxon>
    </lineage>
</organism>
<accession>Q9FN69</accession>
<protein>
    <recommendedName>
        <fullName>Transcription factor GLABRA 3</fullName>
    </recommendedName>
    <alternativeName>
        <fullName>Basic helix-loop-helix protein 1</fullName>
        <shortName>AtMYC6</shortName>
        <shortName>AtbHLH1</shortName>
        <shortName>bHLH 1</shortName>
    </alternativeName>
    <alternativeName>
        <fullName>Protein SHAPESHIFTER</fullName>
    </alternativeName>
    <alternativeName>
        <fullName>Transcription factor EN 31</fullName>
    </alternativeName>
    <alternativeName>
        <fullName>bHLH transcription factor bHLH001</fullName>
    </alternativeName>
</protein>
<gene>
    <name type="primary">GL3</name>
    <name type="synonym">BHLH1</name>
    <name type="synonym">EN31</name>
    <name type="synonym">MYC6</name>
    <name type="synonym">SST</name>
    <name type="ordered locus">At5g41315</name>
    <name type="ORF">MYC6.2</name>
</gene>
<proteinExistence type="evidence at protein level"/>
<keyword id="KW-0010">Activator</keyword>
<keyword id="KW-0217">Developmental protein</keyword>
<keyword id="KW-0238">DNA-binding</keyword>
<keyword id="KW-0539">Nucleus</keyword>
<keyword id="KW-1185">Reference proteome</keyword>
<keyword id="KW-0804">Transcription</keyword>
<keyword id="KW-0805">Transcription regulation</keyword>
<name>GL3_ARATH</name>
<dbReference type="EMBL" id="AF246291">
    <property type="protein sequence ID" value="AAL36964.1"/>
    <property type="molecule type" value="mRNA"/>
</dbReference>
<dbReference type="EMBL" id="AB006707">
    <property type="protein sequence ID" value="BAB08503.1"/>
    <property type="molecule type" value="Genomic_DNA"/>
</dbReference>
<dbReference type="EMBL" id="CP002688">
    <property type="protein sequence ID" value="AED94664.1"/>
    <property type="molecule type" value="Genomic_DNA"/>
</dbReference>
<dbReference type="RefSeq" id="NP_680372.1">
    <property type="nucleotide sequence ID" value="NM_148067.4"/>
</dbReference>
<dbReference type="SMR" id="Q9FN69"/>
<dbReference type="BioGRID" id="19384">
    <property type="interactions" value="21"/>
</dbReference>
<dbReference type="FunCoup" id="Q9FN69">
    <property type="interactions" value="193"/>
</dbReference>
<dbReference type="IntAct" id="Q9FN69">
    <property type="interactions" value="13"/>
</dbReference>
<dbReference type="STRING" id="3702.Q9FN69"/>
<dbReference type="PaxDb" id="3702-AT5G41315.1"/>
<dbReference type="ProteomicsDB" id="228796"/>
<dbReference type="EnsemblPlants" id="AT5G41315.1">
    <property type="protein sequence ID" value="AT5G41315.1"/>
    <property type="gene ID" value="AT5G41315"/>
</dbReference>
<dbReference type="GeneID" id="834133"/>
<dbReference type="Gramene" id="AT5G41315.1">
    <property type="protein sequence ID" value="AT5G41315.1"/>
    <property type="gene ID" value="AT5G41315"/>
</dbReference>
<dbReference type="KEGG" id="ath:AT5G41315"/>
<dbReference type="Araport" id="AT5G41315"/>
<dbReference type="TAIR" id="AT5G41315">
    <property type="gene designation" value="GL3"/>
</dbReference>
<dbReference type="eggNOG" id="ENOG502QT7W">
    <property type="taxonomic scope" value="Eukaryota"/>
</dbReference>
<dbReference type="HOGENOM" id="CLU_023211_1_1_1"/>
<dbReference type="InParanoid" id="Q9FN69"/>
<dbReference type="PhylomeDB" id="Q9FN69"/>
<dbReference type="PRO" id="PR:Q9FN69"/>
<dbReference type="Proteomes" id="UP000006548">
    <property type="component" value="Chromosome 5"/>
</dbReference>
<dbReference type="ExpressionAtlas" id="Q9FN69">
    <property type="expression patterns" value="baseline and differential"/>
</dbReference>
<dbReference type="GO" id="GO:0005634">
    <property type="term" value="C:nucleus"/>
    <property type="evidence" value="ECO:0000314"/>
    <property type="project" value="TAIR"/>
</dbReference>
<dbReference type="GO" id="GO:0003677">
    <property type="term" value="F:DNA binding"/>
    <property type="evidence" value="ECO:0007669"/>
    <property type="project" value="UniProtKB-KW"/>
</dbReference>
<dbReference type="GO" id="GO:0003700">
    <property type="term" value="F:DNA-binding transcription factor activity"/>
    <property type="evidence" value="ECO:0000250"/>
    <property type="project" value="TAIR"/>
</dbReference>
<dbReference type="GO" id="GO:0046983">
    <property type="term" value="F:protein dimerization activity"/>
    <property type="evidence" value="ECO:0007669"/>
    <property type="project" value="InterPro"/>
</dbReference>
<dbReference type="GO" id="GO:0001708">
    <property type="term" value="P:cell fate specification"/>
    <property type="evidence" value="ECO:0000315"/>
    <property type="project" value="TAIR"/>
</dbReference>
<dbReference type="GO" id="GO:0009957">
    <property type="term" value="P:epidermal cell fate specification"/>
    <property type="evidence" value="ECO:0000315"/>
    <property type="project" value="TAIR"/>
</dbReference>
<dbReference type="GO" id="GO:0009867">
    <property type="term" value="P:jasmonic acid mediated signaling pathway"/>
    <property type="evidence" value="ECO:0000315"/>
    <property type="project" value="TAIR"/>
</dbReference>
<dbReference type="GO" id="GO:0031542">
    <property type="term" value="P:positive regulation of anthocyanin biosynthetic process"/>
    <property type="evidence" value="ECO:0000315"/>
    <property type="project" value="TAIR"/>
</dbReference>
<dbReference type="GO" id="GO:0010091">
    <property type="term" value="P:trichome branching"/>
    <property type="evidence" value="ECO:0000315"/>
    <property type="project" value="TAIR"/>
</dbReference>
<dbReference type="GO" id="GO:0010026">
    <property type="term" value="P:trichome differentiation"/>
    <property type="evidence" value="ECO:0000315"/>
    <property type="project" value="TAIR"/>
</dbReference>
<dbReference type="CDD" id="cd11451">
    <property type="entry name" value="bHLH_AtTT8_like"/>
    <property type="match status" value="1"/>
</dbReference>
<dbReference type="FunFam" id="4.10.280.10:FF:000125">
    <property type="entry name" value="Transcription factor EGL1"/>
    <property type="match status" value="1"/>
</dbReference>
<dbReference type="Gene3D" id="4.10.280.10">
    <property type="entry name" value="Helix-loop-helix DNA-binding domain"/>
    <property type="match status" value="1"/>
</dbReference>
<dbReference type="InterPro" id="IPR054502">
    <property type="entry name" value="bHLH-TF_ACT-like_plant"/>
</dbReference>
<dbReference type="InterPro" id="IPR011598">
    <property type="entry name" value="bHLH_dom"/>
</dbReference>
<dbReference type="InterPro" id="IPR036638">
    <property type="entry name" value="HLH_DNA-bd_sf"/>
</dbReference>
<dbReference type="InterPro" id="IPR025610">
    <property type="entry name" value="MYC/MYB_N"/>
</dbReference>
<dbReference type="PANTHER" id="PTHR46266:SF6">
    <property type="entry name" value="TRANSCRIPTION FACTOR GLABRA 3"/>
    <property type="match status" value="1"/>
</dbReference>
<dbReference type="PANTHER" id="PTHR46266">
    <property type="entry name" value="TRANSCRIPTION FACTOR TT8"/>
    <property type="match status" value="1"/>
</dbReference>
<dbReference type="Pfam" id="PF14215">
    <property type="entry name" value="bHLH-MYC_N"/>
    <property type="match status" value="1"/>
</dbReference>
<dbReference type="Pfam" id="PF22754">
    <property type="entry name" value="bHLH-TF_ACT-like_plant"/>
    <property type="match status" value="1"/>
</dbReference>
<dbReference type="Pfam" id="PF00010">
    <property type="entry name" value="HLH"/>
    <property type="match status" value="1"/>
</dbReference>
<dbReference type="SMART" id="SM00353">
    <property type="entry name" value="HLH"/>
    <property type="match status" value="1"/>
</dbReference>
<dbReference type="SUPFAM" id="SSF47459">
    <property type="entry name" value="HLH, helix-loop-helix DNA-binding domain"/>
    <property type="match status" value="1"/>
</dbReference>
<dbReference type="PROSITE" id="PS50888">
    <property type="entry name" value="BHLH"/>
    <property type="match status" value="1"/>
</dbReference>
<sequence>MATGQNRTTVPENLKKHLAVSVRNIQWSYGIFWSVSASQSGVLEWGDGYYNGDIKTRKTIQASEIKADQLGLRRSEQLSELYESLSVAESSSSGVAAGSQVTRRASAAALSPEDLADTEWYYLVCMSFVFNIGEGMPGRTFANGEPIWLCNAHTADSKVFSRSLLAKSAAVKTVVCFPFLGGVVEIGTTEHITEDMNVIQCVKTSFLEAPDPYATILPARSDYHIDNVLDPQQILGDEIYAPMFSTEPFPTASPSRTTNGFDQEHEQVADDHDSFMTERITGGASQVQSWQLMDDELSNCVHQSLNSSDCVSQTFVEGAAGRVAYGARKSRVQRLGQIQEQQRNVKTLSFDPRNDDVHYQSVISTIFKTNHQLILGPQFRNCDKQSSFTRWKKSSSSSSGTATVTAPSQGMLKKIIFDVPRVHQKEKLMLDSPEARDETGNHAVLEKKRREKLNERFMTLRKIIPSINKIDKVSILDDTIEYLQELERRVQELESCRESTDTETRGTMTMKRKKPCDAGERTSANCANNETGNGKKVSVNNVGEAEPADTGFTGLTDNLRIGSFGNEVVIELRCAWREGVLLEIMDVISDLHLDSHSVQSSTGDGLLCLTVNCKHKGSKIATPGMIKEALQRVAWIC</sequence>
<feature type="chain" id="PRO_0000285268" description="Transcription factor GLABRA 3">
    <location>
        <begin position="1"/>
        <end position="637"/>
    </location>
</feature>
<feature type="domain" description="bHLH" evidence="2">
    <location>
        <begin position="437"/>
        <end position="486"/>
    </location>
</feature>
<feature type="region of interest" description="Disordered" evidence="3">
    <location>
        <begin position="497"/>
        <end position="521"/>
    </location>
</feature>
<feature type="region of interest" description="Binding with MYB0/GL1 and MYB23">
    <location>
        <begin position="541"/>
        <end position="637"/>
    </location>
</feature>
<feature type="mutagenesis site" description="In gl3-sst; oddly shaped trichomes with more endoreplication, disturbed cell wall development and abnormal nuclear shape. Reduced interactions with MYB0/GL1 and TTG1." evidence="8">
    <original>L</original>
    <variation>F</variation>
    <location>
        <position position="78"/>
    </location>
</feature>